<gene>
    <name type="primary">cdca8</name>
</gene>
<keyword id="KW-0131">Cell cycle</keyword>
<keyword id="KW-0132">Cell division</keyword>
<keyword id="KW-0137">Centromere</keyword>
<keyword id="KW-0158">Chromosome</keyword>
<keyword id="KW-0159">Chromosome partition</keyword>
<keyword id="KW-0963">Cytoplasm</keyword>
<keyword id="KW-0206">Cytoskeleton</keyword>
<keyword id="KW-0498">Mitosis</keyword>
<keyword id="KW-0539">Nucleus</keyword>
<keyword id="KW-1185">Reference proteome</keyword>
<evidence type="ECO:0000256" key="1">
    <source>
        <dbReference type="SAM" id="MobiDB-lite"/>
    </source>
</evidence>
<evidence type="ECO:0000269" key="2">
    <source>
    </source>
</evidence>
<evidence type="ECO:0000269" key="3">
    <source>
    </source>
</evidence>
<evidence type="ECO:0000305" key="4"/>
<protein>
    <recommendedName>
        <fullName>Borealin</fullName>
    </recommendedName>
    <alternativeName>
        <fullName>Cell division cycle-associated protein 8</fullName>
    </alternativeName>
    <alternativeName>
        <fullName>Dasra-B</fullName>
        <shortName>DasraB</shortName>
        <shortName>xDasraB</shortName>
    </alternativeName>
</protein>
<organism>
    <name type="scientific">Xenopus laevis</name>
    <name type="common">African clawed frog</name>
    <dbReference type="NCBI Taxonomy" id="8355"/>
    <lineage>
        <taxon>Eukaryota</taxon>
        <taxon>Metazoa</taxon>
        <taxon>Chordata</taxon>
        <taxon>Craniata</taxon>
        <taxon>Vertebrata</taxon>
        <taxon>Euteleostomi</taxon>
        <taxon>Amphibia</taxon>
        <taxon>Batrachia</taxon>
        <taxon>Anura</taxon>
        <taxon>Pipoidea</taxon>
        <taxon>Pipidae</taxon>
        <taxon>Xenopodinae</taxon>
        <taxon>Xenopus</taxon>
        <taxon>Xenopus</taxon>
    </lineage>
</organism>
<name>BORE1_XENLA</name>
<dbReference type="EMBL" id="AY644401">
    <property type="protein sequence ID" value="AAT77776.1"/>
    <property type="status" value="ALT_INIT"/>
    <property type="molecule type" value="mRNA"/>
</dbReference>
<dbReference type="EMBL" id="BC106697">
    <property type="protein sequence ID" value="AAI06698.1"/>
    <property type="molecule type" value="mRNA"/>
</dbReference>
<dbReference type="RefSeq" id="NP_001086416.1">
    <property type="nucleotide sequence ID" value="NM_001092947.2"/>
</dbReference>
<dbReference type="SMR" id="Q3KPK4"/>
<dbReference type="BioGRID" id="103012">
    <property type="interactions" value="1"/>
</dbReference>
<dbReference type="DNASU" id="444884"/>
<dbReference type="GeneID" id="444884"/>
<dbReference type="KEGG" id="xla:444884"/>
<dbReference type="AGR" id="Xenbase:XB-GENE-946933"/>
<dbReference type="CTD" id="444884"/>
<dbReference type="Xenbase" id="XB-GENE-946933">
    <property type="gene designation" value="cdca8.L"/>
</dbReference>
<dbReference type="OrthoDB" id="6360905at2759"/>
<dbReference type="CD-CODE" id="735EA068">
    <property type="entry name" value="Synthetic Condensate 000330"/>
</dbReference>
<dbReference type="Proteomes" id="UP000186698">
    <property type="component" value="Chromosome 2L"/>
</dbReference>
<dbReference type="Bgee" id="444884">
    <property type="expression patterns" value="Expressed in egg cell and 17 other cell types or tissues"/>
</dbReference>
<dbReference type="GO" id="GO:0005694">
    <property type="term" value="C:chromosome"/>
    <property type="evidence" value="ECO:0000314"/>
    <property type="project" value="UniProtKB"/>
</dbReference>
<dbReference type="GO" id="GO:0032133">
    <property type="term" value="C:chromosome passenger complex"/>
    <property type="evidence" value="ECO:0000353"/>
    <property type="project" value="UniProtKB"/>
</dbReference>
<dbReference type="GO" id="GO:0000775">
    <property type="term" value="C:chromosome, centromeric region"/>
    <property type="evidence" value="ECO:0000314"/>
    <property type="project" value="UniProtKB"/>
</dbReference>
<dbReference type="GO" id="GO:0005737">
    <property type="term" value="C:cytoplasm"/>
    <property type="evidence" value="ECO:0007669"/>
    <property type="project" value="UniProtKB-KW"/>
</dbReference>
<dbReference type="GO" id="GO:0005634">
    <property type="term" value="C:nucleus"/>
    <property type="evidence" value="ECO:0007669"/>
    <property type="project" value="UniProtKB-SubCell"/>
</dbReference>
<dbReference type="GO" id="GO:0051233">
    <property type="term" value="C:spindle midzone"/>
    <property type="evidence" value="ECO:0000318"/>
    <property type="project" value="GO_Central"/>
</dbReference>
<dbReference type="GO" id="GO:0051301">
    <property type="term" value="P:cell division"/>
    <property type="evidence" value="ECO:0007669"/>
    <property type="project" value="UniProtKB-KW"/>
</dbReference>
<dbReference type="GO" id="GO:0000070">
    <property type="term" value="P:mitotic sister chromatid segregation"/>
    <property type="evidence" value="ECO:0000318"/>
    <property type="project" value="GO_Central"/>
</dbReference>
<dbReference type="GO" id="GO:0051225">
    <property type="term" value="P:spindle assembly"/>
    <property type="evidence" value="ECO:0000250"/>
    <property type="project" value="UniProtKB"/>
</dbReference>
<dbReference type="Gene3D" id="6.10.140.560">
    <property type="match status" value="1"/>
</dbReference>
<dbReference type="Gene3D" id="6.10.250.1900">
    <property type="match status" value="1"/>
</dbReference>
<dbReference type="InterPro" id="IPR046466">
    <property type="entry name" value="Borealin_C"/>
</dbReference>
<dbReference type="InterPro" id="IPR018851">
    <property type="entry name" value="Borealin_N"/>
</dbReference>
<dbReference type="InterPro" id="IPR018867">
    <property type="entry name" value="Cell_div_borealin"/>
</dbReference>
<dbReference type="PANTHER" id="PTHR16040">
    <property type="entry name" value="AUSTRALIN, ISOFORM A-RELATED"/>
    <property type="match status" value="1"/>
</dbReference>
<dbReference type="PANTHER" id="PTHR16040:SF6">
    <property type="entry name" value="BOREALIN"/>
    <property type="match status" value="1"/>
</dbReference>
<dbReference type="Pfam" id="PF10512">
    <property type="entry name" value="Borealin"/>
    <property type="match status" value="1"/>
</dbReference>
<dbReference type="Pfam" id="PF10444">
    <property type="entry name" value="Nbl1_Borealin_N"/>
    <property type="match status" value="1"/>
</dbReference>
<proteinExistence type="evidence at protein level"/>
<reference key="1">
    <citation type="journal article" date="2004" name="Cell">
        <title>The chromosomal passenger complex is required for chromatin-induced microtubule stabilization and spindle assembly.</title>
        <authorList>
            <person name="Sampath S.C."/>
            <person name="Ohi R."/>
            <person name="Leismann O."/>
            <person name="Salic A."/>
            <person name="Pozniakovski A."/>
            <person name="Funabiki H."/>
        </authorList>
    </citation>
    <scope>NUCLEOTIDE SEQUENCE [MRNA]</scope>
    <scope>FUNCTION</scope>
    <scope>SUBCELLULAR LOCATION</scope>
    <scope>IDENTIFICATION IN A COMPLEX WITH INCENP</scope>
    <scope>IDENTIFICATION IN A COMPLEX WITH CDCA9</scope>
    <source>
        <tissue>Egg</tissue>
    </source>
</reference>
<reference key="2">
    <citation type="submission" date="2005-10" db="EMBL/GenBank/DDBJ databases">
        <authorList>
            <consortium name="NIH - Xenopus Gene Collection (XGC) project"/>
        </authorList>
    </citation>
    <scope>NUCLEOTIDE SEQUENCE [LARGE SCALE MRNA]</scope>
    <source>
        <tissue>Ovary</tissue>
    </source>
</reference>
<reference key="3">
    <citation type="journal article" date="2007" name="Dev. Cell">
        <title>Chromosomal enrichment and activation of the aurora B pathway are coupled to spatially regulate spindle assembly.</title>
        <authorList>
            <person name="Kelly A.E."/>
            <person name="Sampath S.C."/>
            <person name="Maniar T.A."/>
            <person name="Woo E.M."/>
            <person name="Chait B.T."/>
            <person name="Funabiki H."/>
        </authorList>
    </citation>
    <scope>FUNCTION</scope>
    <scope>INTERACTION WITH INCENP</scope>
    <scope>IDENTIFICATION IN A COMPLEX WITH AURKB; INCENP; CDCA9; BIRC5.1 AND BIRC5.2</scope>
</reference>
<sequence length="280" mass="30934">MASGKKKTSRKPKNRSVKNEKLASFIKDFDSQVKIITEEMKASVVNILKEVDSQYNIEIIKLPMAIREMCWLDYIAKGGSQKALEAAATVKVDMEEITSTVTKTPFKADKKVKKGKCKPDDETVELNPLKSVIRTKTKAKVAAKKPSTARRTRASVGNVANTSKRTSKRGRATPSASKQAETSLLGYTPAATPRIDTSIFKTPALRTPCMQEPVYTFSANGSPLAGMDELFINVPARDGKIIRLLASEVDGLDINRLDQQAFENIKLLSSRLERLCKKLK</sequence>
<accession>Q3KPK4</accession>
<accession>Q693P2</accession>
<feature type="chain" id="PRO_0000247081" description="Borealin">
    <location>
        <begin position="1"/>
        <end position="280"/>
    </location>
</feature>
<feature type="region of interest" description="Disordered" evidence="1">
    <location>
        <begin position="140"/>
        <end position="187"/>
    </location>
</feature>
<feature type="compositionally biased region" description="Basic residues" evidence="1">
    <location>
        <begin position="140"/>
        <end position="153"/>
    </location>
</feature>
<feature type="sequence conflict" description="In Ref. 1; AAT77776." evidence="4" ref="1">
    <original>S</original>
    <variation>P</variation>
    <location>
        <position position="3"/>
    </location>
</feature>
<feature type="sequence conflict" description="In Ref. 1; AAT77776." evidence="4" ref="1">
    <original>S</original>
    <variation>I</variation>
    <location>
        <position position="9"/>
    </location>
</feature>
<comment type="function">
    <text evidence="2 3">Component of the chromosomal passenger complex (CPC), a complex that acts as a key regulator of mitosis. The CPC complex has essential functions at the centromere in ensuring correct chromosome alignment and segregation and is required for chromatin-induced microtubule stabilization and spindle assembly. Contributes to CPC function by facilitating loading of the CPC onto chromosomes.</text>
</comment>
<comment type="subunit">
    <text evidence="2 3">Component of the CPC at least composed of survivin/birc5, incenp, cdca8/borealin and/or cdca9/dasra-A, and aurkb/aurora-B. Interacts with incenp (via N-terminus).</text>
</comment>
<comment type="subcellular location">
    <subcellularLocation>
        <location evidence="2">Nucleus</location>
    </subcellularLocation>
    <subcellularLocation>
        <location evidence="2">Chromosome</location>
        <location evidence="2">Centromere</location>
    </subcellularLocation>
    <subcellularLocation>
        <location evidence="2">Cytoplasm</location>
        <location evidence="2">Cytoskeleton</location>
        <location evidence="2">Spindle</location>
    </subcellularLocation>
    <text>Localizes on chromosome arms and inner centromeres from prophase through metaphase and then transferring to the spindle midzone and midbody from anaphase through cytokinesis.</text>
</comment>
<comment type="miscellaneous">
    <text>Was named 'Dasra' in reference to the Hindu mythological deity Dasra, who acts as a harbinger of the dawn.</text>
</comment>
<comment type="similarity">
    <text evidence="4">Belongs to the borealin family.</text>
</comment>
<comment type="sequence caution" evidence="4">
    <conflict type="erroneous initiation">
        <sequence resource="EMBL-CDS" id="AAT77776"/>
    </conflict>
</comment>